<name>PUR9_STRZJ</name>
<evidence type="ECO:0000255" key="1">
    <source>
        <dbReference type="HAMAP-Rule" id="MF_00139"/>
    </source>
</evidence>
<evidence type="ECO:0000255" key="2">
    <source>
        <dbReference type="PROSITE-ProRule" id="PRU01202"/>
    </source>
</evidence>
<dbReference type="EC" id="2.1.2.3" evidence="1"/>
<dbReference type="EC" id="3.5.4.10" evidence="1"/>
<dbReference type="EMBL" id="CP000919">
    <property type="protein sequence ID" value="ACO19400.1"/>
    <property type="molecule type" value="Genomic_DNA"/>
</dbReference>
<dbReference type="RefSeq" id="WP_000167083.1">
    <property type="nucleotide sequence ID" value="NC_012466.1"/>
</dbReference>
<dbReference type="SMR" id="C1CBM7"/>
<dbReference type="KEGG" id="sjj:SPJ_0082"/>
<dbReference type="HOGENOM" id="CLU_016316_5_2_9"/>
<dbReference type="UniPathway" id="UPA00074">
    <property type="reaction ID" value="UER00133"/>
</dbReference>
<dbReference type="UniPathway" id="UPA00074">
    <property type="reaction ID" value="UER00135"/>
</dbReference>
<dbReference type="Proteomes" id="UP000002206">
    <property type="component" value="Chromosome"/>
</dbReference>
<dbReference type="GO" id="GO:0005829">
    <property type="term" value="C:cytosol"/>
    <property type="evidence" value="ECO:0007669"/>
    <property type="project" value="TreeGrafter"/>
</dbReference>
<dbReference type="GO" id="GO:0003937">
    <property type="term" value="F:IMP cyclohydrolase activity"/>
    <property type="evidence" value="ECO:0007669"/>
    <property type="project" value="UniProtKB-UniRule"/>
</dbReference>
<dbReference type="GO" id="GO:0004643">
    <property type="term" value="F:phosphoribosylaminoimidazolecarboxamide formyltransferase activity"/>
    <property type="evidence" value="ECO:0007669"/>
    <property type="project" value="UniProtKB-UniRule"/>
</dbReference>
<dbReference type="GO" id="GO:0006189">
    <property type="term" value="P:'de novo' IMP biosynthetic process"/>
    <property type="evidence" value="ECO:0007669"/>
    <property type="project" value="UniProtKB-UniRule"/>
</dbReference>
<dbReference type="CDD" id="cd01421">
    <property type="entry name" value="IMPCH"/>
    <property type="match status" value="1"/>
</dbReference>
<dbReference type="FunFam" id="3.40.140.20:FF:000001">
    <property type="entry name" value="Bifunctional purine biosynthesis protein PurH"/>
    <property type="match status" value="1"/>
</dbReference>
<dbReference type="FunFam" id="3.40.140.20:FF:000002">
    <property type="entry name" value="Bifunctional purine biosynthesis protein PurH"/>
    <property type="match status" value="1"/>
</dbReference>
<dbReference type="FunFam" id="3.40.50.1380:FF:000001">
    <property type="entry name" value="Bifunctional purine biosynthesis protein PurH"/>
    <property type="match status" value="1"/>
</dbReference>
<dbReference type="Gene3D" id="3.40.140.20">
    <property type="match status" value="2"/>
</dbReference>
<dbReference type="Gene3D" id="3.40.50.1380">
    <property type="entry name" value="Methylglyoxal synthase-like domain"/>
    <property type="match status" value="1"/>
</dbReference>
<dbReference type="HAMAP" id="MF_00139">
    <property type="entry name" value="PurH"/>
    <property type="match status" value="1"/>
</dbReference>
<dbReference type="InterPro" id="IPR024051">
    <property type="entry name" value="AICAR_Tfase_dup_dom_sf"/>
</dbReference>
<dbReference type="InterPro" id="IPR016193">
    <property type="entry name" value="Cytidine_deaminase-like"/>
</dbReference>
<dbReference type="InterPro" id="IPR011607">
    <property type="entry name" value="MGS-like_dom"/>
</dbReference>
<dbReference type="InterPro" id="IPR036914">
    <property type="entry name" value="MGS-like_dom_sf"/>
</dbReference>
<dbReference type="InterPro" id="IPR002695">
    <property type="entry name" value="PurH-like"/>
</dbReference>
<dbReference type="NCBIfam" id="NF002049">
    <property type="entry name" value="PRK00881.1"/>
    <property type="match status" value="1"/>
</dbReference>
<dbReference type="NCBIfam" id="TIGR00355">
    <property type="entry name" value="purH"/>
    <property type="match status" value="1"/>
</dbReference>
<dbReference type="PANTHER" id="PTHR11692:SF0">
    <property type="entry name" value="BIFUNCTIONAL PURINE BIOSYNTHESIS PROTEIN ATIC"/>
    <property type="match status" value="1"/>
</dbReference>
<dbReference type="PANTHER" id="PTHR11692">
    <property type="entry name" value="BIFUNCTIONAL PURINE BIOSYNTHESIS PROTEIN PURH"/>
    <property type="match status" value="1"/>
</dbReference>
<dbReference type="Pfam" id="PF01808">
    <property type="entry name" value="AICARFT_IMPCHas"/>
    <property type="match status" value="1"/>
</dbReference>
<dbReference type="Pfam" id="PF02142">
    <property type="entry name" value="MGS"/>
    <property type="match status" value="1"/>
</dbReference>
<dbReference type="PIRSF" id="PIRSF000414">
    <property type="entry name" value="AICARFT_IMPCHas"/>
    <property type="match status" value="1"/>
</dbReference>
<dbReference type="SMART" id="SM00798">
    <property type="entry name" value="AICARFT_IMPCHas"/>
    <property type="match status" value="1"/>
</dbReference>
<dbReference type="SMART" id="SM00851">
    <property type="entry name" value="MGS"/>
    <property type="match status" value="1"/>
</dbReference>
<dbReference type="SUPFAM" id="SSF53927">
    <property type="entry name" value="Cytidine deaminase-like"/>
    <property type="match status" value="1"/>
</dbReference>
<dbReference type="SUPFAM" id="SSF52335">
    <property type="entry name" value="Methylglyoxal synthase-like"/>
    <property type="match status" value="1"/>
</dbReference>
<dbReference type="PROSITE" id="PS51855">
    <property type="entry name" value="MGS"/>
    <property type="match status" value="1"/>
</dbReference>
<organism>
    <name type="scientific">Streptococcus pneumoniae (strain JJA)</name>
    <dbReference type="NCBI Taxonomy" id="488222"/>
    <lineage>
        <taxon>Bacteria</taxon>
        <taxon>Bacillati</taxon>
        <taxon>Bacillota</taxon>
        <taxon>Bacilli</taxon>
        <taxon>Lactobacillales</taxon>
        <taxon>Streptococcaceae</taxon>
        <taxon>Streptococcus</taxon>
    </lineage>
</organism>
<proteinExistence type="inferred from homology"/>
<feature type="chain" id="PRO_1000122976" description="Bifunctional purine biosynthesis protein PurH">
    <location>
        <begin position="1"/>
        <end position="515"/>
    </location>
</feature>
<feature type="domain" description="MGS-like" evidence="2">
    <location>
        <begin position="1"/>
        <end position="145"/>
    </location>
</feature>
<reference key="1">
    <citation type="journal article" date="2010" name="Genome Biol.">
        <title>Structure and dynamics of the pan-genome of Streptococcus pneumoniae and closely related species.</title>
        <authorList>
            <person name="Donati C."/>
            <person name="Hiller N.L."/>
            <person name="Tettelin H."/>
            <person name="Muzzi A."/>
            <person name="Croucher N.J."/>
            <person name="Angiuoli S.V."/>
            <person name="Oggioni M."/>
            <person name="Dunning Hotopp J.C."/>
            <person name="Hu F.Z."/>
            <person name="Riley D.R."/>
            <person name="Covacci A."/>
            <person name="Mitchell T.J."/>
            <person name="Bentley S.D."/>
            <person name="Kilian M."/>
            <person name="Ehrlich G.D."/>
            <person name="Rappuoli R."/>
            <person name="Moxon E.R."/>
            <person name="Masignani V."/>
        </authorList>
    </citation>
    <scope>NUCLEOTIDE SEQUENCE [LARGE SCALE GENOMIC DNA]</scope>
    <source>
        <strain>JJA</strain>
    </source>
</reference>
<sequence length="515" mass="56353">MTKRVLISVSDKAGIVEFAQELKKLGWEIISTGGTKVALDNAGVDTIAIDDVTGFPEMMDGRVKTLHPNIHGGLLARRDLDSHLEAAKDNKIELIDLVVVNLYPFKETILKPDVTYADAVENIDIGGPSMLRSAAKNHASVTVVVDPADYAVVLDELAANGETSYETRQRLAAKVFRHTAAYDALIAEYFTAQVGESKPEKLTLTYDLKQPMRYGENPQQDADFYQKALPTDYSIASAKQLNGKELSFNNIRDADAAIRIIRDFKDSPTVVALKHMNPCGIGQADDIETAWDYAYESDPVSIFGGIVVLNREVDAATAEKMHGVFLEIIIAPSYTDEALAILINKKKNLRILALPFNAQEASEVEAEYTGVVGGLLVQNQDVVKESPADWQVVTKRQPTETEATALEFAWKAIKYVKSNGIIVTNDHMTLGVGPGQTNRVASVRLAIDQAKDRLNGAVLASDAFFPFADNVEEIAKAGIKAIIQPGGSVRDQEFIEAADKYGLTMVFTGVRHFRH</sequence>
<accession>C1CBM7</accession>
<gene>
    <name evidence="1" type="primary">purH</name>
    <name type="ordered locus">SPJ_0082</name>
</gene>
<protein>
    <recommendedName>
        <fullName evidence="1">Bifunctional purine biosynthesis protein PurH</fullName>
    </recommendedName>
    <domain>
        <recommendedName>
            <fullName evidence="1">Phosphoribosylaminoimidazolecarboxamide formyltransferase</fullName>
            <ecNumber evidence="1">2.1.2.3</ecNumber>
        </recommendedName>
        <alternativeName>
            <fullName evidence="1">AICAR transformylase</fullName>
        </alternativeName>
    </domain>
    <domain>
        <recommendedName>
            <fullName evidence="1">IMP cyclohydrolase</fullName>
            <ecNumber evidence="1">3.5.4.10</ecNumber>
        </recommendedName>
        <alternativeName>
            <fullName evidence="1">ATIC</fullName>
        </alternativeName>
        <alternativeName>
            <fullName evidence="1">IMP synthase</fullName>
        </alternativeName>
        <alternativeName>
            <fullName evidence="1">Inosinicase</fullName>
        </alternativeName>
    </domain>
</protein>
<keyword id="KW-0378">Hydrolase</keyword>
<keyword id="KW-0511">Multifunctional enzyme</keyword>
<keyword id="KW-0658">Purine biosynthesis</keyword>
<keyword id="KW-0808">Transferase</keyword>
<comment type="catalytic activity">
    <reaction evidence="1">
        <text>(6R)-10-formyltetrahydrofolate + 5-amino-1-(5-phospho-beta-D-ribosyl)imidazole-4-carboxamide = 5-formamido-1-(5-phospho-D-ribosyl)imidazole-4-carboxamide + (6S)-5,6,7,8-tetrahydrofolate</text>
        <dbReference type="Rhea" id="RHEA:22192"/>
        <dbReference type="ChEBI" id="CHEBI:57453"/>
        <dbReference type="ChEBI" id="CHEBI:58467"/>
        <dbReference type="ChEBI" id="CHEBI:58475"/>
        <dbReference type="ChEBI" id="CHEBI:195366"/>
        <dbReference type="EC" id="2.1.2.3"/>
    </reaction>
</comment>
<comment type="catalytic activity">
    <reaction evidence="1">
        <text>IMP + H2O = 5-formamido-1-(5-phospho-D-ribosyl)imidazole-4-carboxamide</text>
        <dbReference type="Rhea" id="RHEA:18445"/>
        <dbReference type="ChEBI" id="CHEBI:15377"/>
        <dbReference type="ChEBI" id="CHEBI:58053"/>
        <dbReference type="ChEBI" id="CHEBI:58467"/>
        <dbReference type="EC" id="3.5.4.10"/>
    </reaction>
</comment>
<comment type="pathway">
    <text evidence="1">Purine metabolism; IMP biosynthesis via de novo pathway; 5-formamido-1-(5-phospho-D-ribosyl)imidazole-4-carboxamide from 5-amino-1-(5-phospho-D-ribosyl)imidazole-4-carboxamide (10-formyl THF route): step 1/1.</text>
</comment>
<comment type="pathway">
    <text evidence="1">Purine metabolism; IMP biosynthesis via de novo pathway; IMP from 5-formamido-1-(5-phospho-D-ribosyl)imidazole-4-carboxamide: step 1/1.</text>
</comment>
<comment type="domain">
    <text evidence="1">The IMP cyclohydrolase activity resides in the N-terminal region.</text>
</comment>
<comment type="similarity">
    <text evidence="1">Belongs to the PurH family.</text>
</comment>